<keyword id="KW-0975">Bacterial flagellum</keyword>
<keyword id="KW-0998">Cell outer membrane</keyword>
<keyword id="KW-0449">Lipoprotein</keyword>
<keyword id="KW-0472">Membrane</keyword>
<keyword id="KW-0564">Palmitate</keyword>
<keyword id="KW-1185">Reference proteome</keyword>
<keyword id="KW-0732">Signal</keyword>
<feature type="signal peptide" evidence="1">
    <location>
        <begin position="1"/>
        <end position="20"/>
    </location>
</feature>
<feature type="chain" id="PRO_0000009441" description="Flagellar L-ring protein">
    <location>
        <begin position="21"/>
        <end position="231"/>
    </location>
</feature>
<feature type="lipid moiety-binding region" description="N-palmitoyl cysteine" evidence="1">
    <location>
        <position position="21"/>
    </location>
</feature>
<feature type="lipid moiety-binding region" description="S-diacylglycerol cysteine" evidence="1">
    <location>
        <position position="21"/>
    </location>
</feature>
<gene>
    <name evidence="1" type="primary">flgH</name>
    <name type="ordered locus">DP2683</name>
</gene>
<evidence type="ECO:0000255" key="1">
    <source>
        <dbReference type="HAMAP-Rule" id="MF_00415"/>
    </source>
</evidence>
<comment type="function">
    <text evidence="1">Assembles around the rod to form the L-ring and probably protects the motor/basal body from shearing forces during rotation.</text>
</comment>
<comment type="subunit">
    <text evidence="1">The basal body constitutes a major portion of the flagellar organelle and consists of four rings (L,P,S, and M) mounted on a central rod.</text>
</comment>
<comment type="subcellular location">
    <subcellularLocation>
        <location evidence="1">Cell outer membrane</location>
        <topology evidence="1">Lipid-anchor</topology>
    </subcellularLocation>
    <subcellularLocation>
        <location evidence="1">Bacterial flagellum basal body</location>
    </subcellularLocation>
</comment>
<comment type="similarity">
    <text evidence="1">Belongs to the FlgH family.</text>
</comment>
<sequence length="231" mass="24985">MTYRRIPLYLSCLFLLALSGCNSKRPPLVEIPEPLEELQTMSPATRQAGSLWDSNQNSLFSDRKASNVGDIVTVLIEEKSSASKNASTKTGKDSSIGASIPNLFGLEKSSIIANNHIDMNNLIGASFKNDFKGAGSTSRSGTLSAALSTQVIVKYPNGQLKIRGGKEVMVNNEVQVIYLTGIIRPVDITAANTINSDKILNARISYTGKGALGDKQEPGWLTRSLDHVWPF</sequence>
<name>FLGH_DESPS</name>
<protein>
    <recommendedName>
        <fullName evidence="1">Flagellar L-ring protein</fullName>
    </recommendedName>
    <alternativeName>
        <fullName evidence="1">Basal body L-ring protein</fullName>
    </alternativeName>
</protein>
<proteinExistence type="inferred from homology"/>
<reference key="1">
    <citation type="journal article" date="2004" name="Environ. Microbiol.">
        <title>The genome of Desulfotalea psychrophila, a sulfate-reducing bacterium from permanently cold Arctic sediments.</title>
        <authorList>
            <person name="Rabus R."/>
            <person name="Ruepp A."/>
            <person name="Frickey T."/>
            <person name="Rattei T."/>
            <person name="Fartmann B."/>
            <person name="Stark M."/>
            <person name="Bauer M."/>
            <person name="Zibat A."/>
            <person name="Lombardot T."/>
            <person name="Becker I."/>
            <person name="Amann J."/>
            <person name="Gellner K."/>
            <person name="Teeling H."/>
            <person name="Leuschner W.D."/>
            <person name="Gloeckner F.-O."/>
            <person name="Lupas A.N."/>
            <person name="Amann R."/>
            <person name="Klenk H.-P."/>
        </authorList>
    </citation>
    <scope>NUCLEOTIDE SEQUENCE [LARGE SCALE GENOMIC DNA]</scope>
    <source>
        <strain>DSM 12343 / LSv54</strain>
    </source>
</reference>
<dbReference type="EMBL" id="CR522870">
    <property type="protein sequence ID" value="CAG37412.1"/>
    <property type="molecule type" value="Genomic_DNA"/>
</dbReference>
<dbReference type="RefSeq" id="WP_011189924.1">
    <property type="nucleotide sequence ID" value="NC_006138.1"/>
</dbReference>
<dbReference type="SMR" id="Q6AJR8"/>
<dbReference type="STRING" id="177439.DP2683"/>
<dbReference type="KEGG" id="dps:DP2683"/>
<dbReference type="eggNOG" id="COG2063">
    <property type="taxonomic scope" value="Bacteria"/>
</dbReference>
<dbReference type="HOGENOM" id="CLU_069313_2_1_7"/>
<dbReference type="OrthoDB" id="9789227at2"/>
<dbReference type="Proteomes" id="UP000000602">
    <property type="component" value="Chromosome"/>
</dbReference>
<dbReference type="GO" id="GO:0009427">
    <property type="term" value="C:bacterial-type flagellum basal body, distal rod, L ring"/>
    <property type="evidence" value="ECO:0007669"/>
    <property type="project" value="InterPro"/>
</dbReference>
<dbReference type="GO" id="GO:0009279">
    <property type="term" value="C:cell outer membrane"/>
    <property type="evidence" value="ECO:0007669"/>
    <property type="project" value="UniProtKB-SubCell"/>
</dbReference>
<dbReference type="GO" id="GO:0003774">
    <property type="term" value="F:cytoskeletal motor activity"/>
    <property type="evidence" value="ECO:0007669"/>
    <property type="project" value="InterPro"/>
</dbReference>
<dbReference type="GO" id="GO:0071973">
    <property type="term" value="P:bacterial-type flagellum-dependent cell motility"/>
    <property type="evidence" value="ECO:0007669"/>
    <property type="project" value="InterPro"/>
</dbReference>
<dbReference type="HAMAP" id="MF_00415">
    <property type="entry name" value="FlgH"/>
    <property type="match status" value="1"/>
</dbReference>
<dbReference type="InterPro" id="IPR000527">
    <property type="entry name" value="Flag_Lring"/>
</dbReference>
<dbReference type="PANTHER" id="PTHR34933">
    <property type="entry name" value="FLAGELLAR L-RING PROTEIN"/>
    <property type="match status" value="1"/>
</dbReference>
<dbReference type="PANTHER" id="PTHR34933:SF1">
    <property type="entry name" value="FLAGELLAR L-RING PROTEIN"/>
    <property type="match status" value="1"/>
</dbReference>
<dbReference type="Pfam" id="PF02107">
    <property type="entry name" value="FlgH"/>
    <property type="match status" value="1"/>
</dbReference>
<dbReference type="PRINTS" id="PR01008">
    <property type="entry name" value="FLGLRINGFLGH"/>
</dbReference>
<dbReference type="PROSITE" id="PS51257">
    <property type="entry name" value="PROKAR_LIPOPROTEIN"/>
    <property type="match status" value="1"/>
</dbReference>
<accession>Q6AJR8</accession>
<organism>
    <name type="scientific">Desulfotalea psychrophila (strain LSv54 / DSM 12343)</name>
    <dbReference type="NCBI Taxonomy" id="177439"/>
    <lineage>
        <taxon>Bacteria</taxon>
        <taxon>Pseudomonadati</taxon>
        <taxon>Thermodesulfobacteriota</taxon>
        <taxon>Desulfobulbia</taxon>
        <taxon>Desulfobulbales</taxon>
        <taxon>Desulfocapsaceae</taxon>
        <taxon>Desulfotalea</taxon>
    </lineage>
</organism>